<proteinExistence type="inferred from homology"/>
<accession>Q8ENP5</accession>
<dbReference type="EC" id="4.2.1.11" evidence="1"/>
<dbReference type="EMBL" id="BA000028">
    <property type="protein sequence ID" value="BAC14390.1"/>
    <property type="molecule type" value="Genomic_DNA"/>
</dbReference>
<dbReference type="RefSeq" id="WP_011066825.1">
    <property type="nucleotide sequence ID" value="NC_004193.1"/>
</dbReference>
<dbReference type="SMR" id="Q8ENP5"/>
<dbReference type="STRING" id="221109.gene:10734685"/>
<dbReference type="KEGG" id="oih:OB2434"/>
<dbReference type="eggNOG" id="COG0148">
    <property type="taxonomic scope" value="Bacteria"/>
</dbReference>
<dbReference type="HOGENOM" id="CLU_031223_2_1_9"/>
<dbReference type="OrthoDB" id="9804716at2"/>
<dbReference type="PhylomeDB" id="Q8ENP5"/>
<dbReference type="UniPathway" id="UPA00109">
    <property type="reaction ID" value="UER00187"/>
</dbReference>
<dbReference type="Proteomes" id="UP000000822">
    <property type="component" value="Chromosome"/>
</dbReference>
<dbReference type="GO" id="GO:0009986">
    <property type="term" value="C:cell surface"/>
    <property type="evidence" value="ECO:0007669"/>
    <property type="project" value="UniProtKB-SubCell"/>
</dbReference>
<dbReference type="GO" id="GO:0005576">
    <property type="term" value="C:extracellular region"/>
    <property type="evidence" value="ECO:0007669"/>
    <property type="project" value="UniProtKB-SubCell"/>
</dbReference>
<dbReference type="GO" id="GO:0000015">
    <property type="term" value="C:phosphopyruvate hydratase complex"/>
    <property type="evidence" value="ECO:0007669"/>
    <property type="project" value="InterPro"/>
</dbReference>
<dbReference type="GO" id="GO:0000287">
    <property type="term" value="F:magnesium ion binding"/>
    <property type="evidence" value="ECO:0007669"/>
    <property type="project" value="UniProtKB-UniRule"/>
</dbReference>
<dbReference type="GO" id="GO:0004634">
    <property type="term" value="F:phosphopyruvate hydratase activity"/>
    <property type="evidence" value="ECO:0007669"/>
    <property type="project" value="UniProtKB-UniRule"/>
</dbReference>
<dbReference type="GO" id="GO:0006096">
    <property type="term" value="P:glycolytic process"/>
    <property type="evidence" value="ECO:0007669"/>
    <property type="project" value="UniProtKB-UniRule"/>
</dbReference>
<dbReference type="CDD" id="cd03313">
    <property type="entry name" value="enolase"/>
    <property type="match status" value="1"/>
</dbReference>
<dbReference type="FunFam" id="3.20.20.120:FF:000001">
    <property type="entry name" value="Enolase"/>
    <property type="match status" value="1"/>
</dbReference>
<dbReference type="FunFam" id="3.30.390.10:FF:000001">
    <property type="entry name" value="Enolase"/>
    <property type="match status" value="1"/>
</dbReference>
<dbReference type="Gene3D" id="3.20.20.120">
    <property type="entry name" value="Enolase-like C-terminal domain"/>
    <property type="match status" value="1"/>
</dbReference>
<dbReference type="Gene3D" id="3.30.390.10">
    <property type="entry name" value="Enolase-like, N-terminal domain"/>
    <property type="match status" value="1"/>
</dbReference>
<dbReference type="HAMAP" id="MF_00318">
    <property type="entry name" value="Enolase"/>
    <property type="match status" value="1"/>
</dbReference>
<dbReference type="InterPro" id="IPR000941">
    <property type="entry name" value="Enolase"/>
</dbReference>
<dbReference type="InterPro" id="IPR036849">
    <property type="entry name" value="Enolase-like_C_sf"/>
</dbReference>
<dbReference type="InterPro" id="IPR029017">
    <property type="entry name" value="Enolase-like_N"/>
</dbReference>
<dbReference type="InterPro" id="IPR020810">
    <property type="entry name" value="Enolase_C"/>
</dbReference>
<dbReference type="InterPro" id="IPR020809">
    <property type="entry name" value="Enolase_CS"/>
</dbReference>
<dbReference type="InterPro" id="IPR020811">
    <property type="entry name" value="Enolase_N"/>
</dbReference>
<dbReference type="NCBIfam" id="TIGR01060">
    <property type="entry name" value="eno"/>
    <property type="match status" value="1"/>
</dbReference>
<dbReference type="PANTHER" id="PTHR11902">
    <property type="entry name" value="ENOLASE"/>
    <property type="match status" value="1"/>
</dbReference>
<dbReference type="PANTHER" id="PTHR11902:SF1">
    <property type="entry name" value="ENOLASE"/>
    <property type="match status" value="1"/>
</dbReference>
<dbReference type="Pfam" id="PF00113">
    <property type="entry name" value="Enolase_C"/>
    <property type="match status" value="1"/>
</dbReference>
<dbReference type="Pfam" id="PF03952">
    <property type="entry name" value="Enolase_N"/>
    <property type="match status" value="1"/>
</dbReference>
<dbReference type="PIRSF" id="PIRSF001400">
    <property type="entry name" value="Enolase"/>
    <property type="match status" value="1"/>
</dbReference>
<dbReference type="PRINTS" id="PR00148">
    <property type="entry name" value="ENOLASE"/>
</dbReference>
<dbReference type="SFLD" id="SFLDF00002">
    <property type="entry name" value="enolase"/>
    <property type="match status" value="1"/>
</dbReference>
<dbReference type="SFLD" id="SFLDG00178">
    <property type="entry name" value="enolase"/>
    <property type="match status" value="1"/>
</dbReference>
<dbReference type="SMART" id="SM01192">
    <property type="entry name" value="Enolase_C"/>
    <property type="match status" value="1"/>
</dbReference>
<dbReference type="SMART" id="SM01193">
    <property type="entry name" value="Enolase_N"/>
    <property type="match status" value="1"/>
</dbReference>
<dbReference type="SUPFAM" id="SSF51604">
    <property type="entry name" value="Enolase C-terminal domain-like"/>
    <property type="match status" value="1"/>
</dbReference>
<dbReference type="SUPFAM" id="SSF54826">
    <property type="entry name" value="Enolase N-terminal domain-like"/>
    <property type="match status" value="1"/>
</dbReference>
<dbReference type="PROSITE" id="PS00164">
    <property type="entry name" value="ENOLASE"/>
    <property type="match status" value="1"/>
</dbReference>
<protein>
    <recommendedName>
        <fullName evidence="1">Enolase</fullName>
        <ecNumber evidence="1">4.2.1.11</ecNumber>
    </recommendedName>
    <alternativeName>
        <fullName evidence="1">2-phospho-D-glycerate hydro-lyase</fullName>
    </alternativeName>
    <alternativeName>
        <fullName evidence="1">2-phosphoglycerate dehydratase</fullName>
    </alternativeName>
</protein>
<comment type="function">
    <text evidence="1">Catalyzes the reversible conversion of 2-phosphoglycerate (2-PG) into phosphoenolpyruvate (PEP). It is essential for the degradation of carbohydrates via glycolysis.</text>
</comment>
<comment type="catalytic activity">
    <reaction evidence="1">
        <text>(2R)-2-phosphoglycerate = phosphoenolpyruvate + H2O</text>
        <dbReference type="Rhea" id="RHEA:10164"/>
        <dbReference type="ChEBI" id="CHEBI:15377"/>
        <dbReference type="ChEBI" id="CHEBI:58289"/>
        <dbReference type="ChEBI" id="CHEBI:58702"/>
        <dbReference type="EC" id="4.2.1.11"/>
    </reaction>
</comment>
<comment type="cofactor">
    <cofactor evidence="1">
        <name>Mg(2+)</name>
        <dbReference type="ChEBI" id="CHEBI:18420"/>
    </cofactor>
    <text evidence="1">Binds a second Mg(2+) ion via substrate during catalysis.</text>
</comment>
<comment type="pathway">
    <text evidence="1">Carbohydrate degradation; glycolysis; pyruvate from D-glyceraldehyde 3-phosphate: step 4/5.</text>
</comment>
<comment type="subcellular location">
    <subcellularLocation>
        <location evidence="1">Cytoplasm</location>
    </subcellularLocation>
    <subcellularLocation>
        <location evidence="1">Secreted</location>
    </subcellularLocation>
    <subcellularLocation>
        <location evidence="1">Cell surface</location>
    </subcellularLocation>
    <text evidence="1">Fractions of enolase are present in both the cytoplasm and on the cell surface.</text>
</comment>
<comment type="similarity">
    <text evidence="1">Belongs to the enolase family.</text>
</comment>
<reference key="1">
    <citation type="journal article" date="2002" name="Nucleic Acids Res.">
        <title>Genome sequence of Oceanobacillus iheyensis isolated from the Iheya Ridge and its unexpected adaptive capabilities to extreme environments.</title>
        <authorList>
            <person name="Takami H."/>
            <person name="Takaki Y."/>
            <person name="Uchiyama I."/>
        </authorList>
    </citation>
    <scope>NUCLEOTIDE SEQUENCE [LARGE SCALE GENOMIC DNA]</scope>
    <source>
        <strain>DSM 14371 / CIP 107618 / JCM 11309 / KCTC 3954 / HTE831</strain>
    </source>
</reference>
<name>ENO_OCEIH</name>
<sequence length="429" mass="46173">MPYITDVYAREVLDSRGNPTIEVEIFTESGAFGSAIVPSGASTGEYEAVELRDGDKDRYLGKGVQKAVENVNDLIAPELIGIDVTRQNIIDALMIDLDGTENKGKLGANAILGVSMAAAHAAANYLEVPLYNYLGGFNAKTLPTPMMNILNGGEHADNNVDIQEFMIMPVGAPTFKEALRTGAEIFHALKKVLTSKGYNTAVGDEGGFAPNLGSNEEALQTIVEAIEAAGYKPGEEVKLAMDVAASEIYSDGKYNLKGEGVVRSSEEMVDWYEEMISKYPIISIEDGLDENDWDGFKILTDRLGDKVQLVGDDLFVTNTNKLSKGIDQGIGNSILIKVNQIGTLTETFEAIEMAKRAGYTAVISHRSGETEDVTIADIAVATNAGQIKTGAPSRTDRVAKYNQLLRIEDELAGMGEYGGLASFYNLANK</sequence>
<evidence type="ECO:0000255" key="1">
    <source>
        <dbReference type="HAMAP-Rule" id="MF_00318"/>
    </source>
</evidence>
<organism>
    <name type="scientific">Oceanobacillus iheyensis (strain DSM 14371 / CIP 107618 / JCM 11309 / KCTC 3954 / HTE831)</name>
    <dbReference type="NCBI Taxonomy" id="221109"/>
    <lineage>
        <taxon>Bacteria</taxon>
        <taxon>Bacillati</taxon>
        <taxon>Bacillota</taxon>
        <taxon>Bacilli</taxon>
        <taxon>Bacillales</taxon>
        <taxon>Bacillaceae</taxon>
        <taxon>Oceanobacillus</taxon>
    </lineage>
</organism>
<feature type="chain" id="PRO_0000133938" description="Enolase">
    <location>
        <begin position="1"/>
        <end position="429"/>
    </location>
</feature>
<feature type="active site" description="Proton donor" evidence="1">
    <location>
        <position position="205"/>
    </location>
</feature>
<feature type="active site" description="Proton acceptor" evidence="1">
    <location>
        <position position="337"/>
    </location>
</feature>
<feature type="binding site" evidence="1">
    <location>
        <position position="163"/>
    </location>
    <ligand>
        <name>(2R)-2-phosphoglycerate</name>
        <dbReference type="ChEBI" id="CHEBI:58289"/>
    </ligand>
</feature>
<feature type="binding site" evidence="1">
    <location>
        <position position="242"/>
    </location>
    <ligand>
        <name>Mg(2+)</name>
        <dbReference type="ChEBI" id="CHEBI:18420"/>
    </ligand>
</feature>
<feature type="binding site" evidence="1">
    <location>
        <position position="285"/>
    </location>
    <ligand>
        <name>Mg(2+)</name>
        <dbReference type="ChEBI" id="CHEBI:18420"/>
    </ligand>
</feature>
<feature type="binding site" evidence="1">
    <location>
        <position position="312"/>
    </location>
    <ligand>
        <name>Mg(2+)</name>
        <dbReference type="ChEBI" id="CHEBI:18420"/>
    </ligand>
</feature>
<feature type="binding site" evidence="1">
    <location>
        <position position="337"/>
    </location>
    <ligand>
        <name>(2R)-2-phosphoglycerate</name>
        <dbReference type="ChEBI" id="CHEBI:58289"/>
    </ligand>
</feature>
<feature type="binding site" evidence="1">
    <location>
        <position position="366"/>
    </location>
    <ligand>
        <name>(2R)-2-phosphoglycerate</name>
        <dbReference type="ChEBI" id="CHEBI:58289"/>
    </ligand>
</feature>
<feature type="binding site" evidence="1">
    <location>
        <position position="367"/>
    </location>
    <ligand>
        <name>(2R)-2-phosphoglycerate</name>
        <dbReference type="ChEBI" id="CHEBI:58289"/>
    </ligand>
</feature>
<feature type="binding site" evidence="1">
    <location>
        <position position="388"/>
    </location>
    <ligand>
        <name>(2R)-2-phosphoglycerate</name>
        <dbReference type="ChEBI" id="CHEBI:58289"/>
    </ligand>
</feature>
<keyword id="KW-0963">Cytoplasm</keyword>
<keyword id="KW-0324">Glycolysis</keyword>
<keyword id="KW-0456">Lyase</keyword>
<keyword id="KW-0460">Magnesium</keyword>
<keyword id="KW-0479">Metal-binding</keyword>
<keyword id="KW-1185">Reference proteome</keyword>
<keyword id="KW-0964">Secreted</keyword>
<gene>
    <name evidence="1" type="primary">eno</name>
    <name type="ordered locus">OB2434</name>
</gene>